<evidence type="ECO:0000255" key="1">
    <source>
        <dbReference type="HAMAP-Rule" id="MF_00267"/>
    </source>
</evidence>
<feature type="chain" id="PRO_1000114303" description="Probable septum site-determining protein MinC">
    <location>
        <begin position="1"/>
        <end position="228"/>
    </location>
</feature>
<reference key="1">
    <citation type="submission" date="2008-04" db="EMBL/GenBank/DDBJ databases">
        <title>Complete sequence of Yersinia pseudotuberculosis PB1/+.</title>
        <authorList>
            <person name="Copeland A."/>
            <person name="Lucas S."/>
            <person name="Lapidus A."/>
            <person name="Glavina del Rio T."/>
            <person name="Dalin E."/>
            <person name="Tice H."/>
            <person name="Bruce D."/>
            <person name="Goodwin L."/>
            <person name="Pitluck S."/>
            <person name="Munk A.C."/>
            <person name="Brettin T."/>
            <person name="Detter J.C."/>
            <person name="Han C."/>
            <person name="Tapia R."/>
            <person name="Schmutz J."/>
            <person name="Larimer F."/>
            <person name="Land M."/>
            <person name="Hauser L."/>
            <person name="Challacombe J.F."/>
            <person name="Green L."/>
            <person name="Lindler L.E."/>
            <person name="Nikolich M.P."/>
            <person name="Richardson P."/>
        </authorList>
    </citation>
    <scope>NUCLEOTIDE SEQUENCE [LARGE SCALE GENOMIC DNA]</scope>
    <source>
        <strain>PB1/+</strain>
    </source>
</reference>
<accession>B2K3N9</accession>
<proteinExistence type="inferred from homology"/>
<comment type="function">
    <text evidence="1">Cell division inhibitor that blocks the formation of polar Z ring septums. Rapidly oscillates between the poles of the cell to destabilize FtsZ filaments that have formed before they mature into polar Z rings. Prevents FtsZ polymerization.</text>
</comment>
<comment type="subunit">
    <text evidence="1">Interacts with MinD and FtsZ.</text>
</comment>
<comment type="similarity">
    <text evidence="1">Belongs to the MinC family.</text>
</comment>
<dbReference type="EMBL" id="CP001048">
    <property type="protein sequence ID" value="ACC89085.1"/>
    <property type="molecule type" value="Genomic_DNA"/>
</dbReference>
<dbReference type="RefSeq" id="WP_002220631.1">
    <property type="nucleotide sequence ID" value="NZ_CP009780.1"/>
</dbReference>
<dbReference type="SMR" id="B2K3N9"/>
<dbReference type="GeneID" id="96665552"/>
<dbReference type="KEGG" id="ypb:YPTS_2122"/>
<dbReference type="PATRIC" id="fig|502801.10.peg.1512"/>
<dbReference type="GO" id="GO:0000902">
    <property type="term" value="P:cell morphogenesis"/>
    <property type="evidence" value="ECO:0007669"/>
    <property type="project" value="InterPro"/>
</dbReference>
<dbReference type="GO" id="GO:0000917">
    <property type="term" value="P:division septum assembly"/>
    <property type="evidence" value="ECO:0007669"/>
    <property type="project" value="UniProtKB-KW"/>
</dbReference>
<dbReference type="GO" id="GO:0051302">
    <property type="term" value="P:regulation of cell division"/>
    <property type="evidence" value="ECO:0007669"/>
    <property type="project" value="InterPro"/>
</dbReference>
<dbReference type="GO" id="GO:1901891">
    <property type="term" value="P:regulation of cell septum assembly"/>
    <property type="evidence" value="ECO:0007669"/>
    <property type="project" value="InterPro"/>
</dbReference>
<dbReference type="FunFam" id="2.160.20.70:FF:000002">
    <property type="entry name" value="Probable septum site-determining protein MinC"/>
    <property type="match status" value="1"/>
</dbReference>
<dbReference type="Gene3D" id="2.160.20.70">
    <property type="match status" value="1"/>
</dbReference>
<dbReference type="Gene3D" id="3.30.70.260">
    <property type="match status" value="1"/>
</dbReference>
<dbReference type="HAMAP" id="MF_00267">
    <property type="entry name" value="MinC"/>
    <property type="match status" value="1"/>
</dbReference>
<dbReference type="InterPro" id="IPR016098">
    <property type="entry name" value="CAP/MinC_C"/>
</dbReference>
<dbReference type="InterPro" id="IPR013033">
    <property type="entry name" value="MinC"/>
</dbReference>
<dbReference type="InterPro" id="IPR036145">
    <property type="entry name" value="MinC_C_sf"/>
</dbReference>
<dbReference type="InterPro" id="IPR007874">
    <property type="entry name" value="MinC_N"/>
</dbReference>
<dbReference type="InterPro" id="IPR005526">
    <property type="entry name" value="Septum_form_inhib_MinC_C"/>
</dbReference>
<dbReference type="NCBIfam" id="TIGR01222">
    <property type="entry name" value="minC"/>
    <property type="match status" value="1"/>
</dbReference>
<dbReference type="PANTHER" id="PTHR34108">
    <property type="entry name" value="SEPTUM SITE-DETERMINING PROTEIN MINC"/>
    <property type="match status" value="1"/>
</dbReference>
<dbReference type="PANTHER" id="PTHR34108:SF1">
    <property type="entry name" value="SEPTUM SITE-DETERMINING PROTEIN MINC"/>
    <property type="match status" value="1"/>
</dbReference>
<dbReference type="Pfam" id="PF03775">
    <property type="entry name" value="MinC_C"/>
    <property type="match status" value="1"/>
</dbReference>
<dbReference type="Pfam" id="PF05209">
    <property type="entry name" value="MinC_N"/>
    <property type="match status" value="1"/>
</dbReference>
<dbReference type="SUPFAM" id="SSF63848">
    <property type="entry name" value="Cell-division inhibitor MinC, C-terminal domain"/>
    <property type="match status" value="1"/>
</dbReference>
<organism>
    <name type="scientific">Yersinia pseudotuberculosis serotype IB (strain PB1/+)</name>
    <dbReference type="NCBI Taxonomy" id="502801"/>
    <lineage>
        <taxon>Bacteria</taxon>
        <taxon>Pseudomonadati</taxon>
        <taxon>Pseudomonadota</taxon>
        <taxon>Gammaproteobacteria</taxon>
        <taxon>Enterobacterales</taxon>
        <taxon>Yersiniaceae</taxon>
        <taxon>Yersinia</taxon>
    </lineage>
</organism>
<protein>
    <recommendedName>
        <fullName evidence="1">Probable septum site-determining protein MinC</fullName>
    </recommendedName>
</protein>
<sequence>MSQSPIELKGSSFTLSVVHLHDSRPEVIRQALQEKVDQAPAFLKNAPVVINVATLPNGANWKDLQQAVTSAGLRIVGISGCQDERQKRAIARAGLPLLSEGKGQKLAPEPVISPPENVPTQTRIINTPVRSGQQIYARNCDLIVISSVSAGAELIADGNIHIYGMMRGRALAGASGDAKCQIFCTHLGAELVSIAGQYWLSDQIPLEYFGQAARLYLQDNTLTIQPLN</sequence>
<gene>
    <name evidence="1" type="primary">minC</name>
    <name type="ordered locus">YPTS_2122</name>
</gene>
<name>MINC_YERPB</name>
<keyword id="KW-0131">Cell cycle</keyword>
<keyword id="KW-0132">Cell division</keyword>
<keyword id="KW-0717">Septation</keyword>